<feature type="signal peptide" evidence="6">
    <location>
        <begin position="1"/>
        <end position="22"/>
    </location>
</feature>
<feature type="chain" id="PRO_0000420824" description="Glycerophosphocholine choline phosphodiesterase ENPP6">
    <location>
        <begin position="23"/>
        <end position="421"/>
    </location>
</feature>
<feature type="propeptide" id="PRO_0000420889" description="Removed in mature form" evidence="5">
    <location>
        <begin position="422"/>
        <end position="445"/>
    </location>
</feature>
<feature type="active site" description="Nucleophile" evidence="5">
    <location>
        <position position="71"/>
    </location>
</feature>
<feature type="binding site" evidence="4">
    <location>
        <position position="32"/>
    </location>
    <ligand>
        <name>substrate</name>
    </ligand>
</feature>
<feature type="binding site" evidence="4">
    <location>
        <position position="32"/>
    </location>
    <ligand>
        <name>Zn(2+)</name>
        <dbReference type="ChEBI" id="CHEBI:29105"/>
        <label>1</label>
        <note>catalytic</note>
    </ligand>
</feature>
<feature type="binding site" evidence="4">
    <location>
        <position position="71"/>
    </location>
    <ligand>
        <name>substrate</name>
    </ligand>
</feature>
<feature type="binding site" evidence="4">
    <location>
        <position position="71"/>
    </location>
    <ligand>
        <name>Zn(2+)</name>
        <dbReference type="ChEBI" id="CHEBI:29105"/>
        <label>1</label>
        <note>catalytic</note>
    </ligand>
</feature>
<feature type="binding site" evidence="4">
    <location>
        <position position="92"/>
    </location>
    <ligand>
        <name>substrate</name>
    </ligand>
</feature>
<feature type="binding site" evidence="4">
    <location>
        <position position="193"/>
    </location>
    <ligand>
        <name>substrate</name>
    </ligand>
</feature>
<feature type="binding site" evidence="4">
    <location>
        <position position="193"/>
    </location>
    <ligand>
        <name>Zn(2+)</name>
        <dbReference type="ChEBI" id="CHEBI:29105"/>
        <label>2</label>
        <note>catalytic</note>
    </ligand>
</feature>
<feature type="binding site" evidence="4">
    <location>
        <position position="197"/>
    </location>
    <ligand>
        <name>Zn(2+)</name>
        <dbReference type="ChEBI" id="CHEBI:29105"/>
        <label>2</label>
        <note>catalytic</note>
    </ligand>
</feature>
<feature type="binding site" evidence="4">
    <location>
        <position position="240"/>
    </location>
    <ligand>
        <name>Zn(2+)</name>
        <dbReference type="ChEBI" id="CHEBI:29105"/>
        <label>1</label>
        <note>catalytic</note>
    </ligand>
</feature>
<feature type="binding site" evidence="4">
    <location>
        <position position="241"/>
    </location>
    <ligand>
        <name>substrate</name>
    </ligand>
</feature>
<feature type="binding site" evidence="4">
    <location>
        <position position="241"/>
    </location>
    <ligand>
        <name>Zn(2+)</name>
        <dbReference type="ChEBI" id="CHEBI:29105"/>
        <label>1</label>
        <note>catalytic</note>
    </ligand>
</feature>
<feature type="binding site" evidence="4">
    <location>
        <position position="356"/>
    </location>
    <ligand>
        <name>substrate</name>
    </ligand>
</feature>
<feature type="binding site" evidence="4">
    <location>
        <position position="356"/>
    </location>
    <ligand>
        <name>Zn(2+)</name>
        <dbReference type="ChEBI" id="CHEBI:29105"/>
        <label>2</label>
        <note>catalytic</note>
    </ligand>
</feature>
<feature type="modified residue" description="Phosphoserine" evidence="2">
    <location>
        <position position="71"/>
    </location>
</feature>
<feature type="lipid moiety-binding region" description="GPI-anchor amidated serine" evidence="5">
    <location>
        <position position="421"/>
    </location>
</feature>
<feature type="glycosylation site" description="N-linked (GlcNAc...) asparagine" evidence="6">
    <location>
        <position position="100"/>
    </location>
</feature>
<feature type="glycosylation site" description="N-linked (GlcNAc...) asparagine" evidence="6">
    <location>
        <position position="118"/>
    </location>
</feature>
<feature type="glycosylation site" description="N-linked (GlcNAc...) asparagine" evidence="6">
    <location>
        <position position="341"/>
    </location>
</feature>
<feature type="glycosylation site" description="N-linked (GlcNAc...) asparagine" evidence="6">
    <location>
        <position position="406"/>
    </location>
</feature>
<feature type="disulfide bond" evidence="6">
    <location>
        <begin position="142"/>
        <end position="154"/>
    </location>
</feature>
<feature type="disulfide bond" description="Interchain" evidence="6">
    <location>
        <position position="414"/>
    </location>
</feature>
<dbReference type="EC" id="3.1.4.-" evidence="4"/>
<dbReference type="EC" id="3.1.4.38" evidence="6"/>
<dbReference type="EMBL" id="DAAA02060163">
    <property type="status" value="NOT_ANNOTATED_CDS"/>
    <property type="molecule type" value="Genomic_DNA"/>
</dbReference>
<dbReference type="EMBL" id="DAAA02060164">
    <property type="status" value="NOT_ANNOTATED_CDS"/>
    <property type="molecule type" value="Genomic_DNA"/>
</dbReference>
<dbReference type="EMBL" id="AAFC03002535">
    <property type="status" value="NOT_ANNOTATED_CDS"/>
    <property type="molecule type" value="Genomic_DNA"/>
</dbReference>
<dbReference type="EMBL" id="AAFC03002537">
    <property type="status" value="NOT_ANNOTATED_CDS"/>
    <property type="molecule type" value="Genomic_DNA"/>
</dbReference>
<dbReference type="EMBL" id="AAFC03120609">
    <property type="status" value="NOT_ANNOTATED_CDS"/>
    <property type="molecule type" value="Genomic_DNA"/>
</dbReference>
<dbReference type="RefSeq" id="XP_005197234.1">
    <property type="nucleotide sequence ID" value="XM_005197177.3"/>
</dbReference>
<dbReference type="RefSeq" id="XP_005226063.1">
    <property type="nucleotide sequence ID" value="XM_005226006.5"/>
</dbReference>
<dbReference type="SMR" id="F1N5C8"/>
<dbReference type="FunCoup" id="F1N5C8">
    <property type="interactions" value="31"/>
</dbReference>
<dbReference type="STRING" id="9913.ENSBTAP00000015375"/>
<dbReference type="GlyCosmos" id="F1N5C8">
    <property type="glycosylation" value="4 sites, No reported glycans"/>
</dbReference>
<dbReference type="GlyGen" id="F1N5C8">
    <property type="glycosylation" value="4 sites"/>
</dbReference>
<dbReference type="iPTMnet" id="F1N5C8"/>
<dbReference type="PaxDb" id="9913-ENSBTAP00000015375"/>
<dbReference type="Ensembl" id="ENSBTAT00000015375.7">
    <property type="protein sequence ID" value="ENSBTAP00000015375.5"/>
    <property type="gene ID" value="ENSBTAG00000011573.7"/>
</dbReference>
<dbReference type="GeneID" id="537431"/>
<dbReference type="KEGG" id="bta:537431"/>
<dbReference type="CTD" id="133121"/>
<dbReference type="VEuPathDB" id="HostDB:ENSBTAG00000011573"/>
<dbReference type="VGNC" id="VGNC:28507">
    <property type="gene designation" value="ENPP6"/>
</dbReference>
<dbReference type="eggNOG" id="KOG2645">
    <property type="taxonomic scope" value="Eukaryota"/>
</dbReference>
<dbReference type="GeneTree" id="ENSGT00940000158457"/>
<dbReference type="HOGENOM" id="CLU_017594_2_0_1"/>
<dbReference type="InParanoid" id="F1N5C8"/>
<dbReference type="OMA" id="NVSMYYW"/>
<dbReference type="OrthoDB" id="415411at2759"/>
<dbReference type="TreeFam" id="TF330032"/>
<dbReference type="Reactome" id="R-BTA-6814848">
    <property type="pathway name" value="Glycerophospholipid catabolism"/>
</dbReference>
<dbReference type="SABIO-RK" id="F1N5C8"/>
<dbReference type="Proteomes" id="UP000009136">
    <property type="component" value="Chromosome 27"/>
</dbReference>
<dbReference type="Bgee" id="ENSBTAG00000011573">
    <property type="expression patterns" value="Expressed in uterine horn and 60 other cell types or tissues"/>
</dbReference>
<dbReference type="GO" id="GO:0005886">
    <property type="term" value="C:plasma membrane"/>
    <property type="evidence" value="ECO:0000318"/>
    <property type="project" value="GO_Central"/>
</dbReference>
<dbReference type="GO" id="GO:0098552">
    <property type="term" value="C:side of membrane"/>
    <property type="evidence" value="ECO:0007669"/>
    <property type="project" value="UniProtKB-KW"/>
</dbReference>
<dbReference type="GO" id="GO:0047390">
    <property type="term" value="F:glycerophosphocholine cholinephosphodiesterase activity"/>
    <property type="evidence" value="ECO:0000250"/>
    <property type="project" value="UniProtKB"/>
</dbReference>
<dbReference type="GO" id="GO:0008889">
    <property type="term" value="F:glycerophosphodiester phosphodiesterase activity"/>
    <property type="evidence" value="ECO:0000318"/>
    <property type="project" value="GO_Central"/>
</dbReference>
<dbReference type="GO" id="GO:0046872">
    <property type="term" value="F:metal ion binding"/>
    <property type="evidence" value="ECO:0007669"/>
    <property type="project" value="UniProtKB-KW"/>
</dbReference>
<dbReference type="GO" id="GO:0019695">
    <property type="term" value="P:choline metabolic process"/>
    <property type="evidence" value="ECO:0000250"/>
    <property type="project" value="UniProtKB"/>
</dbReference>
<dbReference type="GO" id="GO:0016042">
    <property type="term" value="P:lipid catabolic process"/>
    <property type="evidence" value="ECO:0007669"/>
    <property type="project" value="UniProtKB-KW"/>
</dbReference>
<dbReference type="GO" id="GO:0006629">
    <property type="term" value="P:lipid metabolic process"/>
    <property type="evidence" value="ECO:0000318"/>
    <property type="project" value="GO_Central"/>
</dbReference>
<dbReference type="CDD" id="cd16018">
    <property type="entry name" value="Enpp"/>
    <property type="match status" value="1"/>
</dbReference>
<dbReference type="FunFam" id="3.30.1360.180:FF:000001">
    <property type="entry name" value="Ectonucleotide pyrophosphatase/phosphodiesterase family member 6"/>
    <property type="match status" value="1"/>
</dbReference>
<dbReference type="FunFam" id="3.40.720.10:FF:000029">
    <property type="entry name" value="ectonucleotide pyrophosphatase/phosphodiesterase family member 6"/>
    <property type="match status" value="1"/>
</dbReference>
<dbReference type="Gene3D" id="3.30.1360.180">
    <property type="match status" value="1"/>
</dbReference>
<dbReference type="Gene3D" id="3.40.720.10">
    <property type="entry name" value="Alkaline Phosphatase, subunit A"/>
    <property type="match status" value="1"/>
</dbReference>
<dbReference type="InterPro" id="IPR017850">
    <property type="entry name" value="Alkaline_phosphatase_core_sf"/>
</dbReference>
<dbReference type="InterPro" id="IPR002591">
    <property type="entry name" value="Phosphodiest/P_Trfase"/>
</dbReference>
<dbReference type="PANTHER" id="PTHR10151">
    <property type="entry name" value="ECTONUCLEOTIDE PYROPHOSPHATASE/PHOSPHODIESTERASE"/>
    <property type="match status" value="1"/>
</dbReference>
<dbReference type="PANTHER" id="PTHR10151:SF66">
    <property type="entry name" value="GLYCEROPHOSPHOCHOLINE CHOLINEPHOSPHODIESTERASE ENPP6"/>
    <property type="match status" value="1"/>
</dbReference>
<dbReference type="Pfam" id="PF01663">
    <property type="entry name" value="Phosphodiest"/>
    <property type="match status" value="1"/>
</dbReference>
<dbReference type="SUPFAM" id="SSF53649">
    <property type="entry name" value="Alkaline phosphatase-like"/>
    <property type="match status" value="1"/>
</dbReference>
<proteinExistence type="evidence at protein level"/>
<gene>
    <name evidence="3" type="primary">ENPP6</name>
</gene>
<accession>F1N5C8</accession>
<evidence type="ECO:0000250" key="1"/>
<evidence type="ECO:0000250" key="2">
    <source>
        <dbReference type="UniProtKB" id="B0BND0"/>
    </source>
</evidence>
<evidence type="ECO:0000250" key="3">
    <source>
        <dbReference type="UniProtKB" id="Q6UWR7"/>
    </source>
</evidence>
<evidence type="ECO:0000250" key="4">
    <source>
        <dbReference type="UniProtKB" id="Q8BGN3"/>
    </source>
</evidence>
<evidence type="ECO:0000255" key="5"/>
<evidence type="ECO:0000269" key="6">
    <source>
    </source>
</evidence>
<evidence type="ECO:0000303" key="7">
    <source>
    </source>
</evidence>
<evidence type="ECO:0000305" key="8"/>
<evidence type="ECO:0000305" key="9">
    <source>
    </source>
</evidence>
<protein>
    <recommendedName>
        <fullName evidence="3">Glycerophosphocholine choline phosphodiesterase ENPP6</fullName>
        <shortName evidence="7">GPC-Cpde</shortName>
        <ecNumber evidence="4">3.1.4.-</ecNumber>
        <ecNumber evidence="6">3.1.4.38</ecNumber>
    </recommendedName>
    <alternativeName>
        <fullName evidence="4">Choline-specific glycerophosphodiester phosphodiesterase</fullName>
    </alternativeName>
    <alternativeName>
        <fullName>Ectonucleotide pyrophosphatase/phosphodiesterase family member 6</fullName>
        <shortName>E-NPP 6</shortName>
        <shortName>NPP-6</shortName>
    </alternativeName>
</protein>
<keyword id="KW-1003">Cell membrane</keyword>
<keyword id="KW-0903">Direct protein sequencing</keyword>
<keyword id="KW-1015">Disulfide bond</keyword>
<keyword id="KW-0325">Glycoprotein</keyword>
<keyword id="KW-0336">GPI-anchor</keyword>
<keyword id="KW-0378">Hydrolase</keyword>
<keyword id="KW-0442">Lipid degradation</keyword>
<keyword id="KW-0443">Lipid metabolism</keyword>
<keyword id="KW-0449">Lipoprotein</keyword>
<keyword id="KW-0472">Membrane</keyword>
<keyword id="KW-0479">Metal-binding</keyword>
<keyword id="KW-0597">Phosphoprotein</keyword>
<keyword id="KW-1185">Reference proteome</keyword>
<keyword id="KW-0732">Signal</keyword>
<keyword id="KW-0862">Zinc</keyword>
<name>ENPP6_BOVIN</name>
<organism>
    <name type="scientific">Bos taurus</name>
    <name type="common">Bovine</name>
    <dbReference type="NCBI Taxonomy" id="9913"/>
    <lineage>
        <taxon>Eukaryota</taxon>
        <taxon>Metazoa</taxon>
        <taxon>Chordata</taxon>
        <taxon>Craniata</taxon>
        <taxon>Vertebrata</taxon>
        <taxon>Euteleostomi</taxon>
        <taxon>Mammalia</taxon>
        <taxon>Eutheria</taxon>
        <taxon>Laurasiatheria</taxon>
        <taxon>Artiodactyla</taxon>
        <taxon>Ruminantia</taxon>
        <taxon>Pecora</taxon>
        <taxon>Bovidae</taxon>
        <taxon>Bovinae</taxon>
        <taxon>Bos</taxon>
    </lineage>
</organism>
<comment type="function">
    <text evidence="4 6">Choline-specific glycerophosphodiesterase that hydrolyzes glycerophosphocholine (GPC) and lysophosphatidylcholine (LPC) and contributes to supplying choline to the cells (PubMed:23161088). Has a preference for LPC with short (12:0 and 14:0) or polyunsaturated (18:2 and 20:4) fatty acids. In vitro, hydrolyzes only choline-containing lysophospholipids, such as sphingosylphosphorylcholine (SPC), platelet-activating factor (PAF) and lysoPAF, but not other lysophospholipids (By similarity).</text>
</comment>
<comment type="catalytic activity">
    <reaction evidence="6">
        <text>sn-glycerol 3-phosphocholine + H2O = phosphocholine + glycerol + H(+)</text>
        <dbReference type="Rhea" id="RHEA:19545"/>
        <dbReference type="ChEBI" id="CHEBI:15377"/>
        <dbReference type="ChEBI" id="CHEBI:15378"/>
        <dbReference type="ChEBI" id="CHEBI:16870"/>
        <dbReference type="ChEBI" id="CHEBI:17754"/>
        <dbReference type="ChEBI" id="CHEBI:295975"/>
        <dbReference type="EC" id="3.1.4.38"/>
    </reaction>
    <physiologicalReaction direction="left-to-right" evidence="9">
        <dbReference type="Rhea" id="RHEA:19546"/>
    </physiologicalReaction>
</comment>
<comment type="catalytic activity">
    <reaction evidence="6">
        <text>a 1-acyl-sn-glycero-3-phosphocholine + H2O = a 1-acyl-sn-glycerol + phosphocholine + H(+)</text>
        <dbReference type="Rhea" id="RHEA:44720"/>
        <dbReference type="ChEBI" id="CHEBI:15377"/>
        <dbReference type="ChEBI" id="CHEBI:15378"/>
        <dbReference type="ChEBI" id="CHEBI:58168"/>
        <dbReference type="ChEBI" id="CHEBI:64683"/>
        <dbReference type="ChEBI" id="CHEBI:295975"/>
    </reaction>
    <physiologicalReaction direction="left-to-right" evidence="9">
        <dbReference type="Rhea" id="RHEA:44721"/>
    </physiologicalReaction>
</comment>
<comment type="catalytic activity">
    <reaction evidence="4">
        <text>a 1-O-alkyl-sn-glycero-3-phosphocholine + H2O = a 1-O-alkyl-sn-glycerol + phosphocholine + H(+)</text>
        <dbReference type="Rhea" id="RHEA:36083"/>
        <dbReference type="ChEBI" id="CHEBI:15377"/>
        <dbReference type="ChEBI" id="CHEBI:15378"/>
        <dbReference type="ChEBI" id="CHEBI:15850"/>
        <dbReference type="ChEBI" id="CHEBI:30909"/>
        <dbReference type="ChEBI" id="CHEBI:295975"/>
    </reaction>
    <physiologicalReaction direction="left-to-right" evidence="4">
        <dbReference type="Rhea" id="RHEA:36084"/>
    </physiologicalReaction>
</comment>
<comment type="catalytic activity">
    <reaction evidence="4">
        <text>1-dodecanoyl-sn-glycero-3-phosphocholine + H2O = 1-dodecanoyl-sn-glycerol + phosphocholine + H(+)</text>
        <dbReference type="Rhea" id="RHEA:41127"/>
        <dbReference type="ChEBI" id="CHEBI:15377"/>
        <dbReference type="ChEBI" id="CHEBI:15378"/>
        <dbReference type="ChEBI" id="CHEBI:74966"/>
        <dbReference type="ChEBI" id="CHEBI:75529"/>
        <dbReference type="ChEBI" id="CHEBI:295975"/>
    </reaction>
    <physiologicalReaction direction="left-to-right" evidence="4">
        <dbReference type="Rhea" id="RHEA:41128"/>
    </physiologicalReaction>
</comment>
<comment type="catalytic activity">
    <reaction evidence="4">
        <text>1-hexadecanoyl-sn-glycero-3-phosphocholine + H2O = 1-hexadecanoyl-sn-glycerol + phosphocholine + H(+)</text>
        <dbReference type="Rhea" id="RHEA:41119"/>
        <dbReference type="ChEBI" id="CHEBI:15377"/>
        <dbReference type="ChEBI" id="CHEBI:15378"/>
        <dbReference type="ChEBI" id="CHEBI:72998"/>
        <dbReference type="ChEBI" id="CHEBI:75542"/>
        <dbReference type="ChEBI" id="CHEBI:295975"/>
    </reaction>
    <physiologicalReaction direction="left-to-right" evidence="4">
        <dbReference type="Rhea" id="RHEA:41120"/>
    </physiologicalReaction>
</comment>
<comment type="catalytic activity">
    <reaction evidence="4">
        <text>1-(5Z,8Z,11Z,14Z-eicosatetraenoyl)-sn-glycero-3-phosphocholine + H2O = 1-(5Z,8Z,11Z,14Z-eicosatetraenoyl)-sn-glycerol + phosphocholine + H(+)</text>
        <dbReference type="Rhea" id="RHEA:41003"/>
        <dbReference type="ChEBI" id="CHEBI:15377"/>
        <dbReference type="ChEBI" id="CHEBI:15378"/>
        <dbReference type="ChEBI" id="CHEBI:34071"/>
        <dbReference type="ChEBI" id="CHEBI:74344"/>
        <dbReference type="ChEBI" id="CHEBI:295975"/>
    </reaction>
    <physiologicalReaction direction="left-to-right" evidence="4">
        <dbReference type="Rhea" id="RHEA:41004"/>
    </physiologicalReaction>
</comment>
<comment type="catalytic activity">
    <reaction evidence="4">
        <text>1-tetradecanoyl-sn-glycero-3-phosphocholine + H2O = 1-tetradecanoyl-sn-glycerol + phosphocholine + H(+)</text>
        <dbReference type="Rhea" id="RHEA:40999"/>
        <dbReference type="ChEBI" id="CHEBI:15377"/>
        <dbReference type="ChEBI" id="CHEBI:15378"/>
        <dbReference type="ChEBI" id="CHEBI:64489"/>
        <dbReference type="ChEBI" id="CHEBI:75536"/>
        <dbReference type="ChEBI" id="CHEBI:295975"/>
    </reaction>
    <physiologicalReaction direction="left-to-right" evidence="4">
        <dbReference type="Rhea" id="RHEA:41000"/>
    </physiologicalReaction>
</comment>
<comment type="catalytic activity">
    <reaction evidence="6">
        <text>sphing-4-enine-phosphocholine + H2O = sphing-4-enine + phosphocholine + H(+)</text>
        <dbReference type="Rhea" id="RHEA:41095"/>
        <dbReference type="ChEBI" id="CHEBI:15377"/>
        <dbReference type="ChEBI" id="CHEBI:15378"/>
        <dbReference type="ChEBI" id="CHEBI:57756"/>
        <dbReference type="ChEBI" id="CHEBI:58906"/>
        <dbReference type="ChEBI" id="CHEBI:295975"/>
    </reaction>
    <physiologicalReaction direction="left-to-right" evidence="9">
        <dbReference type="Rhea" id="RHEA:41096"/>
    </physiologicalReaction>
</comment>
<comment type="catalytic activity">
    <reaction evidence="4">
        <text>1-(9Z-octadecenoyl)-sn-glycero-3-phosphocholine + H2O = 1-(9Z-octadecenoyl)-sn-glycerol + phosphocholine + H(+)</text>
        <dbReference type="Rhea" id="RHEA:41091"/>
        <dbReference type="ChEBI" id="CHEBI:15377"/>
        <dbReference type="ChEBI" id="CHEBI:15378"/>
        <dbReference type="ChEBI" id="CHEBI:28610"/>
        <dbReference type="ChEBI" id="CHEBI:75757"/>
        <dbReference type="ChEBI" id="CHEBI:295975"/>
    </reaction>
    <physiologicalReaction direction="left-to-right" evidence="4">
        <dbReference type="Rhea" id="RHEA:41092"/>
    </physiologicalReaction>
</comment>
<comment type="catalytic activity">
    <reaction evidence="4">
        <text>1-(9Z,12Z)-octadecadienoyl-sn-glycero-3-phosphocholine + H2O = 1-(9Z,12Z-octadecadienoyl)-sn-glycerol + phosphocholine + H(+)</text>
        <dbReference type="Rhea" id="RHEA:41115"/>
        <dbReference type="ChEBI" id="CHEBI:15377"/>
        <dbReference type="ChEBI" id="CHEBI:15378"/>
        <dbReference type="ChEBI" id="CHEBI:28733"/>
        <dbReference type="ChEBI" id="CHEBI:75561"/>
        <dbReference type="ChEBI" id="CHEBI:295975"/>
    </reaction>
    <physiologicalReaction direction="left-to-right" evidence="4">
        <dbReference type="Rhea" id="RHEA:41116"/>
    </physiologicalReaction>
</comment>
<comment type="catalytic activity">
    <reaction evidence="4">
        <text>glycero-2-phosphocholine + H2O = phosphocholine + glycerol + H(+)</text>
        <dbReference type="Rhea" id="RHEA:61684"/>
        <dbReference type="ChEBI" id="CHEBI:15377"/>
        <dbReference type="ChEBI" id="CHEBI:15378"/>
        <dbReference type="ChEBI" id="CHEBI:17754"/>
        <dbReference type="ChEBI" id="CHEBI:144950"/>
        <dbReference type="ChEBI" id="CHEBI:295975"/>
    </reaction>
    <physiologicalReaction direction="left-to-right" evidence="4">
        <dbReference type="Rhea" id="RHEA:61685"/>
    </physiologicalReaction>
</comment>
<comment type="cofactor">
    <cofactor evidence="4">
        <name>Zn(2+)</name>
        <dbReference type="ChEBI" id="CHEBI:29105"/>
    </cofactor>
    <text evidence="4">Binds 2 Zn(2+) ions per subunit.</text>
</comment>
<comment type="activity regulation">
    <text evidence="1">Inhibited by EDTA and EGTA in vitro.</text>
</comment>
<comment type="biophysicochemical properties">
    <kinetics>
        <KM evidence="6">2000 uM for lysophosphatidylcholine</KM>
        <KM evidence="6">5000 uM for glycerophosphocholine</KM>
        <KM evidence="6">35 uM for p-nitrophenylphosphocholine</KM>
        <KM evidence="6">5 uM for lysosphingomyelin</KM>
    </kinetics>
</comment>
<comment type="subunit">
    <text evidence="4 6">Homodimer; disulfide-linked (By similarity) (PubMed:23161088). Homotetramer (By similarity).</text>
</comment>
<comment type="subcellular location">
    <subcellularLocation>
        <location>Cell membrane</location>
        <topology>Lipid-anchor</topology>
        <topology>GPI-anchor</topology>
    </subcellularLocation>
</comment>
<comment type="similarity">
    <text evidence="8">Belongs to the nucleotide pyrophosphatase/phosphodiesterase family.</text>
</comment>
<sequence length="445" mass="50495">MAGKLGVLLLALVLSLAQPASARRKLLVFLLDGFRADYISDEALESLPGFKEIVSRGVKVDYLTPDFPTLSYPNYYSLMTGRHCEVHQMTGNYMWDPDTNKSFDLGINRDSRLPLWWNGSEPLWVTLTKAKRKVYMYYWPGCEVEILGVRPTYCLEYKSVPTDINFVNAVSGALDVFKSGQADLAAIYYERVDVEGHHYGPSSPQRKDAVKAVDTVMAYMTKWIQERDLQDDLNVIIFSDHGMTDISWTDKVIKLDNYINLRDLQQLKGRGPVVSLWPAPGKHSEIYNKVRRVEHMTVYAKEDIPSRFYYKKGKFVSPLTLVADEGWFITENRESLPFWMNSTVTRKPEGWQWGWHGYDNELRAMRGIFLAFGPDFKSDFRAAPIRVVDIYNLMCKVTGVTPLPNNGSWSRVMCMLKDPASSAPGAPPCACALVTVLLVLLAILA</sequence>
<reference key="1">
    <citation type="journal article" date="2009" name="Genome Biol.">
        <title>A whole-genome assembly of the domestic cow, Bos taurus.</title>
        <authorList>
            <person name="Zimin A.V."/>
            <person name="Delcher A.L."/>
            <person name="Florea L."/>
            <person name="Kelley D.R."/>
            <person name="Schatz M.C."/>
            <person name="Puiu D."/>
            <person name="Hanrahan F."/>
            <person name="Pertea G."/>
            <person name="Van Tassell C.P."/>
            <person name="Sonstegard T.S."/>
            <person name="Marcais G."/>
            <person name="Roberts M."/>
            <person name="Subramanian P."/>
            <person name="Yorke J.A."/>
            <person name="Salzberg S.L."/>
        </authorList>
    </citation>
    <scope>NUCLEOTIDE SEQUENCE [LARGE SCALE GENOMIC DNA]</scope>
    <source>
        <strain>Hereford</strain>
    </source>
</reference>
<reference key="2">
    <citation type="journal article" date="2009" name="Science">
        <title>The genome sequence of taurine cattle: a window to ruminant biology and evolution.</title>
        <authorList>
            <consortium name="The bovine genome sequencing and analysis consortium"/>
        </authorList>
    </citation>
    <scope>NUCLEOTIDE SEQUENCE [LARGE SCALE GENOMIC DNA]</scope>
    <source>
        <strain>Hereford</strain>
    </source>
</reference>
<reference key="3">
    <citation type="journal article" date="2013" name="Neurochem. Res.">
        <title>Bovine brain myelin glycerophosphocholine choline phosphodiesterase is an alkaline lysosphingomyelinase of the eNPP-family, regulated by lysosomal sorting.</title>
        <authorList>
            <person name="Greiner-Tollersrud L."/>
            <person name="Berg T."/>
            <person name="Stensland H.M."/>
            <person name="Evjen G."/>
            <person name="Greiner-Tollersrud O.K."/>
        </authorList>
    </citation>
    <scope>PROTEIN SEQUENCE OF 23-51; 60-109; 113-129; 134-206; 212-222; 228-251; 255-262; 271-289; 292-301; 315-363; 367-377 AND 387-417</scope>
    <scope>FUNCTION</scope>
    <scope>HOMODIMERIZATION</scope>
    <scope>DISULFIDE BONDS</scope>
    <scope>BIOPHYSICOCHEMICAL PROPERTIES</scope>
    <scope>SIGNAL SEQUENCE CLEAVAGE SITE</scope>
    <scope>GLYCOSYLATION AT ASN-100; ASN-118; ASN-341 AND ASN-406</scope>
    <scope>GPI-ANCHOR</scope>
    <scope>CATALYTIC ACTIVITY</scope>
    <source>
        <tissue>Brain</tissue>
    </source>
</reference>